<sequence>MLKEFREFVLRGNVADMAVGIIIGGAFGAIVNTLVSDVLMPPLGLLIGGIDFSNFYLVLKEGSAPGPYAALADAKAVGAVTVNYGIFLNALISFMIMAFAVFMLIKSLTSMRGKPEPPAPAPAVKECPYCCSTIPLKASRCPECTSQLEK</sequence>
<protein>
    <recommendedName>
        <fullName evidence="1">Large-conductance mechanosensitive channel</fullName>
    </recommendedName>
</protein>
<dbReference type="EMBL" id="CP001097">
    <property type="protein sequence ID" value="ACD90269.1"/>
    <property type="molecule type" value="Genomic_DNA"/>
</dbReference>
<dbReference type="RefSeq" id="WP_012466146.1">
    <property type="nucleotide sequence ID" value="NC_010803.1"/>
</dbReference>
<dbReference type="STRING" id="290315.Clim_1202"/>
<dbReference type="KEGG" id="cli:Clim_1202"/>
<dbReference type="eggNOG" id="COG1970">
    <property type="taxonomic scope" value="Bacteria"/>
</dbReference>
<dbReference type="HOGENOM" id="CLU_095787_2_3_10"/>
<dbReference type="OrthoDB" id="9810350at2"/>
<dbReference type="Proteomes" id="UP000008841">
    <property type="component" value="Chromosome"/>
</dbReference>
<dbReference type="GO" id="GO:0005886">
    <property type="term" value="C:plasma membrane"/>
    <property type="evidence" value="ECO:0007669"/>
    <property type="project" value="UniProtKB-SubCell"/>
</dbReference>
<dbReference type="GO" id="GO:0008381">
    <property type="term" value="F:mechanosensitive monoatomic ion channel activity"/>
    <property type="evidence" value="ECO:0007669"/>
    <property type="project" value="UniProtKB-UniRule"/>
</dbReference>
<dbReference type="Gene3D" id="1.10.1200.120">
    <property type="entry name" value="Large-conductance mechanosensitive channel, MscL, domain 1"/>
    <property type="match status" value="1"/>
</dbReference>
<dbReference type="HAMAP" id="MF_00115">
    <property type="entry name" value="MscL"/>
    <property type="match status" value="1"/>
</dbReference>
<dbReference type="InterPro" id="IPR001185">
    <property type="entry name" value="MS_channel"/>
</dbReference>
<dbReference type="InterPro" id="IPR037673">
    <property type="entry name" value="MSC/AndL"/>
</dbReference>
<dbReference type="InterPro" id="IPR036019">
    <property type="entry name" value="MscL_channel"/>
</dbReference>
<dbReference type="NCBIfam" id="TIGR00220">
    <property type="entry name" value="mscL"/>
    <property type="match status" value="1"/>
</dbReference>
<dbReference type="PANTHER" id="PTHR30266:SF2">
    <property type="entry name" value="LARGE-CONDUCTANCE MECHANOSENSITIVE CHANNEL"/>
    <property type="match status" value="1"/>
</dbReference>
<dbReference type="PANTHER" id="PTHR30266">
    <property type="entry name" value="MECHANOSENSITIVE CHANNEL MSCL"/>
    <property type="match status" value="1"/>
</dbReference>
<dbReference type="Pfam" id="PF01741">
    <property type="entry name" value="MscL"/>
    <property type="match status" value="1"/>
</dbReference>
<dbReference type="PRINTS" id="PR01264">
    <property type="entry name" value="MECHCHANNEL"/>
</dbReference>
<dbReference type="SUPFAM" id="SSF81330">
    <property type="entry name" value="Gated mechanosensitive channel"/>
    <property type="match status" value="1"/>
</dbReference>
<reference key="1">
    <citation type="submission" date="2008-05" db="EMBL/GenBank/DDBJ databases">
        <title>Complete sequence of Chlorobium limicola DSM 245.</title>
        <authorList>
            <consortium name="US DOE Joint Genome Institute"/>
            <person name="Lucas S."/>
            <person name="Copeland A."/>
            <person name="Lapidus A."/>
            <person name="Glavina del Rio T."/>
            <person name="Dalin E."/>
            <person name="Tice H."/>
            <person name="Bruce D."/>
            <person name="Goodwin L."/>
            <person name="Pitluck S."/>
            <person name="Schmutz J."/>
            <person name="Larimer F."/>
            <person name="Land M."/>
            <person name="Hauser L."/>
            <person name="Kyrpides N."/>
            <person name="Ovchinnikova G."/>
            <person name="Zhao F."/>
            <person name="Li T."/>
            <person name="Liu Z."/>
            <person name="Overmann J."/>
            <person name="Bryant D.A."/>
            <person name="Richardson P."/>
        </authorList>
    </citation>
    <scope>NUCLEOTIDE SEQUENCE [LARGE SCALE GENOMIC DNA]</scope>
    <source>
        <strain>DSM 245 / NBRC 103803 / 6330</strain>
    </source>
</reference>
<feature type="chain" id="PRO_1000094887" description="Large-conductance mechanosensitive channel">
    <location>
        <begin position="1"/>
        <end position="150"/>
    </location>
</feature>
<feature type="transmembrane region" description="Helical" evidence="1">
    <location>
        <begin position="19"/>
        <end position="39"/>
    </location>
</feature>
<feature type="transmembrane region" description="Helical" evidence="1">
    <location>
        <begin position="85"/>
        <end position="105"/>
    </location>
</feature>
<gene>
    <name evidence="1" type="primary">mscL</name>
    <name type="ordered locus">Clim_1202</name>
</gene>
<evidence type="ECO:0000255" key="1">
    <source>
        <dbReference type="HAMAP-Rule" id="MF_00115"/>
    </source>
</evidence>
<name>MSCL_CHLL2</name>
<organism>
    <name type="scientific">Chlorobium limicola (strain DSM 245 / NBRC 103803 / 6330)</name>
    <dbReference type="NCBI Taxonomy" id="290315"/>
    <lineage>
        <taxon>Bacteria</taxon>
        <taxon>Pseudomonadati</taxon>
        <taxon>Chlorobiota</taxon>
        <taxon>Chlorobiia</taxon>
        <taxon>Chlorobiales</taxon>
        <taxon>Chlorobiaceae</taxon>
        <taxon>Chlorobium/Pelodictyon group</taxon>
        <taxon>Chlorobium</taxon>
    </lineage>
</organism>
<comment type="function">
    <text evidence="1">Channel that opens in response to stretch forces in the membrane lipid bilayer. May participate in the regulation of osmotic pressure changes within the cell.</text>
</comment>
<comment type="subunit">
    <text evidence="1">Homopentamer.</text>
</comment>
<comment type="subcellular location">
    <subcellularLocation>
        <location evidence="1">Cell inner membrane</location>
        <topology evidence="1">Multi-pass membrane protein</topology>
    </subcellularLocation>
</comment>
<comment type="similarity">
    <text evidence="1">Belongs to the MscL family.</text>
</comment>
<accession>B3ECJ4</accession>
<proteinExistence type="inferred from homology"/>
<keyword id="KW-0997">Cell inner membrane</keyword>
<keyword id="KW-1003">Cell membrane</keyword>
<keyword id="KW-0407">Ion channel</keyword>
<keyword id="KW-0406">Ion transport</keyword>
<keyword id="KW-0472">Membrane</keyword>
<keyword id="KW-0812">Transmembrane</keyword>
<keyword id="KW-1133">Transmembrane helix</keyword>
<keyword id="KW-0813">Transport</keyword>